<proteinExistence type="inferred from homology"/>
<evidence type="ECO:0000255" key="1">
    <source>
        <dbReference type="HAMAP-Rule" id="MF_01011"/>
    </source>
</evidence>
<protein>
    <recommendedName>
        <fullName evidence="1">tRNA/tmRNA (uracil-C(5))-methyltransferase</fullName>
        <ecNumber evidence="1">2.1.1.-</ecNumber>
        <ecNumber evidence="1">2.1.1.35</ecNumber>
    </recommendedName>
    <alternativeName>
        <fullName evidence="1">tRNA (uracil(54)-C(5))-methyltransferase</fullName>
    </alternativeName>
    <alternativeName>
        <fullName evidence="1">tRNA(m5U54)-methyltransferase</fullName>
        <shortName evidence="1">RUMT</shortName>
    </alternativeName>
    <alternativeName>
        <fullName evidence="1">tmRNA (uracil(341)-C(5))-methyltransferase</fullName>
    </alternativeName>
</protein>
<name>TRMA_ALISL</name>
<feature type="chain" id="PRO_1000198535" description="tRNA/tmRNA (uracil-C(5))-methyltransferase">
    <location>
        <begin position="1"/>
        <end position="368"/>
    </location>
</feature>
<feature type="active site" description="Nucleophile" evidence="1">
    <location>
        <position position="326"/>
    </location>
</feature>
<feature type="active site" description="Proton acceptor" evidence="1">
    <location>
        <position position="360"/>
    </location>
</feature>
<feature type="binding site" evidence="1">
    <location>
        <position position="190"/>
    </location>
    <ligand>
        <name>S-adenosyl-L-methionine</name>
        <dbReference type="ChEBI" id="CHEBI:59789"/>
    </ligand>
</feature>
<feature type="binding site" evidence="1">
    <location>
        <position position="218"/>
    </location>
    <ligand>
        <name>S-adenosyl-L-methionine</name>
        <dbReference type="ChEBI" id="CHEBI:59789"/>
    </ligand>
</feature>
<feature type="binding site" evidence="1">
    <location>
        <position position="223"/>
    </location>
    <ligand>
        <name>S-adenosyl-L-methionine</name>
        <dbReference type="ChEBI" id="CHEBI:59789"/>
    </ligand>
</feature>
<feature type="binding site" evidence="1">
    <location>
        <position position="239"/>
    </location>
    <ligand>
        <name>S-adenosyl-L-methionine</name>
        <dbReference type="ChEBI" id="CHEBI:59789"/>
    </ligand>
</feature>
<feature type="binding site" evidence="1">
    <location>
        <position position="301"/>
    </location>
    <ligand>
        <name>S-adenosyl-L-methionine</name>
        <dbReference type="ChEBI" id="CHEBI:59789"/>
    </ligand>
</feature>
<keyword id="KW-0489">Methyltransferase</keyword>
<keyword id="KW-0949">S-adenosyl-L-methionine</keyword>
<keyword id="KW-0808">Transferase</keyword>
<keyword id="KW-0819">tRNA processing</keyword>
<accession>B6ENT4</accession>
<gene>
    <name evidence="1" type="primary">trmA</name>
    <name type="ordered locus">VSAL_I2887</name>
</gene>
<sequence>MTQPVMNPENYQVQLDEKTEALSAMFSEFDVPELEVFSSPAENYRMRAEFRIWHEGDDMYYVMFDQKTKEKYRVDYFLPATRLINDLMPLLAEAIKGSKTLRYKMFQVDFLSTLSGEILVSMLYHRQLDDAWKEEAAVLKQQLNEKGFNLNLIGRARKMKIVLDQEFVIEKLKVNDDILTYKQVENSFTQPNGVVAQKMLEWAVDCTQDSQGDLLELYCGNGNFSLALAKNFDRVLATELAKPSVESAQYNIAANNIDNVQIVRMSAEDFTDAMEGKREFRRLKDQNVDLKSYNCNTIFVDPPRSGMDEGTCKMVQGYERIMYISCNPDTLKENLAILSKTHNITRFALFDQFPYTHHMEAGIFLERK</sequence>
<dbReference type="EC" id="2.1.1.-" evidence="1"/>
<dbReference type="EC" id="2.1.1.35" evidence="1"/>
<dbReference type="EMBL" id="FM178379">
    <property type="protein sequence ID" value="CAQ80571.1"/>
    <property type="molecule type" value="Genomic_DNA"/>
</dbReference>
<dbReference type="RefSeq" id="WP_012551305.1">
    <property type="nucleotide sequence ID" value="NC_011312.1"/>
</dbReference>
<dbReference type="SMR" id="B6ENT4"/>
<dbReference type="KEGG" id="vsa:VSAL_I2887"/>
<dbReference type="eggNOG" id="COG2265">
    <property type="taxonomic scope" value="Bacteria"/>
</dbReference>
<dbReference type="HOGENOM" id="CLU_043022_0_0_6"/>
<dbReference type="Proteomes" id="UP000001730">
    <property type="component" value="Chromosome 1"/>
</dbReference>
<dbReference type="GO" id="GO:0005829">
    <property type="term" value="C:cytosol"/>
    <property type="evidence" value="ECO:0007669"/>
    <property type="project" value="TreeGrafter"/>
</dbReference>
<dbReference type="GO" id="GO:0019843">
    <property type="term" value="F:rRNA binding"/>
    <property type="evidence" value="ECO:0007669"/>
    <property type="project" value="TreeGrafter"/>
</dbReference>
<dbReference type="GO" id="GO:0030697">
    <property type="term" value="F:tRNA (uracil(54)-C5)-methyltransferase activity, S-adenosyl methionine-dependent"/>
    <property type="evidence" value="ECO:0007669"/>
    <property type="project" value="UniProtKB-UniRule"/>
</dbReference>
<dbReference type="GO" id="GO:0000049">
    <property type="term" value="F:tRNA binding"/>
    <property type="evidence" value="ECO:0007669"/>
    <property type="project" value="TreeGrafter"/>
</dbReference>
<dbReference type="GO" id="GO:0030488">
    <property type="term" value="P:tRNA methylation"/>
    <property type="evidence" value="ECO:0007669"/>
    <property type="project" value="UniProtKB-UniRule"/>
</dbReference>
<dbReference type="CDD" id="cd02440">
    <property type="entry name" value="AdoMet_MTases"/>
    <property type="match status" value="1"/>
</dbReference>
<dbReference type="FunFam" id="2.40.50.1070:FF:000001">
    <property type="entry name" value="tRNA/tmRNA (uracil-C(5))-methyltransferase"/>
    <property type="match status" value="1"/>
</dbReference>
<dbReference type="FunFam" id="3.40.50.150:FF:000012">
    <property type="entry name" value="tRNA/tmRNA (uracil-C(5))-methyltransferase"/>
    <property type="match status" value="1"/>
</dbReference>
<dbReference type="Gene3D" id="2.40.50.1070">
    <property type="match status" value="1"/>
</dbReference>
<dbReference type="Gene3D" id="3.40.50.150">
    <property type="entry name" value="Vaccinia Virus protein VP39"/>
    <property type="match status" value="1"/>
</dbReference>
<dbReference type="HAMAP" id="MF_01011">
    <property type="entry name" value="RNA_methyltr_TrmA"/>
    <property type="match status" value="1"/>
</dbReference>
<dbReference type="InterPro" id="IPR030390">
    <property type="entry name" value="MeTrfase_TrmA_AS"/>
</dbReference>
<dbReference type="InterPro" id="IPR030391">
    <property type="entry name" value="MeTrfase_TrmA_CS"/>
</dbReference>
<dbReference type="InterPro" id="IPR029063">
    <property type="entry name" value="SAM-dependent_MTases_sf"/>
</dbReference>
<dbReference type="InterPro" id="IPR011869">
    <property type="entry name" value="TrmA_MeTrfase"/>
</dbReference>
<dbReference type="InterPro" id="IPR010280">
    <property type="entry name" value="U5_MeTrfase_fam"/>
</dbReference>
<dbReference type="NCBIfam" id="TIGR02143">
    <property type="entry name" value="trmA_only"/>
    <property type="match status" value="1"/>
</dbReference>
<dbReference type="PANTHER" id="PTHR47790">
    <property type="entry name" value="TRNA/TMRNA (URACIL-C(5))-METHYLTRANSFERASE"/>
    <property type="match status" value="1"/>
</dbReference>
<dbReference type="PANTHER" id="PTHR47790:SF2">
    <property type="entry name" value="TRNA_TMRNA (URACIL-C(5))-METHYLTRANSFERASE"/>
    <property type="match status" value="1"/>
</dbReference>
<dbReference type="Pfam" id="PF05958">
    <property type="entry name" value="tRNA_U5-meth_tr"/>
    <property type="match status" value="1"/>
</dbReference>
<dbReference type="SUPFAM" id="SSF53335">
    <property type="entry name" value="S-adenosyl-L-methionine-dependent methyltransferases"/>
    <property type="match status" value="1"/>
</dbReference>
<dbReference type="PROSITE" id="PS51687">
    <property type="entry name" value="SAM_MT_RNA_M5U"/>
    <property type="match status" value="1"/>
</dbReference>
<dbReference type="PROSITE" id="PS01230">
    <property type="entry name" value="TRMA_1"/>
    <property type="match status" value="1"/>
</dbReference>
<dbReference type="PROSITE" id="PS01231">
    <property type="entry name" value="TRMA_2"/>
    <property type="match status" value="1"/>
</dbReference>
<organism>
    <name type="scientific">Aliivibrio salmonicida (strain LFI1238)</name>
    <name type="common">Vibrio salmonicida (strain LFI1238)</name>
    <dbReference type="NCBI Taxonomy" id="316275"/>
    <lineage>
        <taxon>Bacteria</taxon>
        <taxon>Pseudomonadati</taxon>
        <taxon>Pseudomonadota</taxon>
        <taxon>Gammaproteobacteria</taxon>
        <taxon>Vibrionales</taxon>
        <taxon>Vibrionaceae</taxon>
        <taxon>Aliivibrio</taxon>
    </lineage>
</organism>
<comment type="function">
    <text evidence="1">Dual-specificity methyltransferase that catalyzes the formation of 5-methyluridine at position 54 (m5U54) in all tRNAs, and that of position 341 (m5U341) in tmRNA (transfer-mRNA).</text>
</comment>
<comment type="catalytic activity">
    <reaction evidence="1">
        <text>uridine(54) in tRNA + S-adenosyl-L-methionine = 5-methyluridine(54) in tRNA + S-adenosyl-L-homocysteine + H(+)</text>
        <dbReference type="Rhea" id="RHEA:42712"/>
        <dbReference type="Rhea" id="RHEA-COMP:10167"/>
        <dbReference type="Rhea" id="RHEA-COMP:10193"/>
        <dbReference type="ChEBI" id="CHEBI:15378"/>
        <dbReference type="ChEBI" id="CHEBI:57856"/>
        <dbReference type="ChEBI" id="CHEBI:59789"/>
        <dbReference type="ChEBI" id="CHEBI:65315"/>
        <dbReference type="ChEBI" id="CHEBI:74447"/>
        <dbReference type="EC" id="2.1.1.35"/>
    </reaction>
</comment>
<comment type="catalytic activity">
    <reaction evidence="1">
        <text>uridine(341) in tmRNA + S-adenosyl-L-methionine = 5-methyluridine(341) in tmRNA + S-adenosyl-L-homocysteine + H(+)</text>
        <dbReference type="Rhea" id="RHEA:43612"/>
        <dbReference type="Rhea" id="RHEA-COMP:10630"/>
        <dbReference type="Rhea" id="RHEA-COMP:10631"/>
        <dbReference type="ChEBI" id="CHEBI:15378"/>
        <dbReference type="ChEBI" id="CHEBI:57856"/>
        <dbReference type="ChEBI" id="CHEBI:59789"/>
        <dbReference type="ChEBI" id="CHEBI:65315"/>
        <dbReference type="ChEBI" id="CHEBI:74447"/>
    </reaction>
</comment>
<comment type="similarity">
    <text evidence="1">Belongs to the class I-like SAM-binding methyltransferase superfamily. RNA M5U methyltransferase family. TrmA subfamily.</text>
</comment>
<reference key="1">
    <citation type="journal article" date="2008" name="BMC Genomics">
        <title>The genome sequence of the fish pathogen Aliivibrio salmonicida strain LFI1238 shows extensive evidence of gene decay.</title>
        <authorList>
            <person name="Hjerde E."/>
            <person name="Lorentzen M.S."/>
            <person name="Holden M.T."/>
            <person name="Seeger K."/>
            <person name="Paulsen S."/>
            <person name="Bason N."/>
            <person name="Churcher C."/>
            <person name="Harris D."/>
            <person name="Norbertczak H."/>
            <person name="Quail M.A."/>
            <person name="Sanders S."/>
            <person name="Thurston S."/>
            <person name="Parkhill J."/>
            <person name="Willassen N.P."/>
            <person name="Thomson N.R."/>
        </authorList>
    </citation>
    <scope>NUCLEOTIDE SEQUENCE [LARGE SCALE GENOMIC DNA]</scope>
    <source>
        <strain>LFI1238</strain>
    </source>
</reference>